<organism>
    <name type="scientific">Bacillus subtilis (strain 168)</name>
    <dbReference type="NCBI Taxonomy" id="224308"/>
    <lineage>
        <taxon>Bacteria</taxon>
        <taxon>Bacillati</taxon>
        <taxon>Bacillota</taxon>
        <taxon>Bacilli</taxon>
        <taxon>Bacillales</taxon>
        <taxon>Bacillaceae</taxon>
        <taxon>Bacillus</taxon>
    </lineage>
</organism>
<dbReference type="EMBL" id="Z93932">
    <property type="protein sequence ID" value="CAB07907.1"/>
    <property type="molecule type" value="Genomic_DNA"/>
</dbReference>
<dbReference type="EMBL" id="AL009126">
    <property type="protein sequence ID" value="CAB15153.2"/>
    <property type="molecule type" value="Genomic_DNA"/>
</dbReference>
<dbReference type="PIR" id="F70008">
    <property type="entry name" value="F70008"/>
</dbReference>
<dbReference type="RefSeq" id="NP_391043.2">
    <property type="nucleotide sequence ID" value="NC_000964.3"/>
</dbReference>
<dbReference type="RefSeq" id="WP_003228814.1">
    <property type="nucleotide sequence ID" value="NZ_OZ025638.1"/>
</dbReference>
<dbReference type="SMR" id="O05228"/>
<dbReference type="FunCoup" id="O05228">
    <property type="interactions" value="25"/>
</dbReference>
<dbReference type="STRING" id="224308.BSU31650"/>
<dbReference type="TCDB" id="2.A.63.1.4">
    <property type="family name" value="the monovalent cation (k(+) or na(+)):proton antiporter-3 (cpa3) family"/>
</dbReference>
<dbReference type="PaxDb" id="224308-BSU31650"/>
<dbReference type="EnsemblBacteria" id="CAB15153">
    <property type="protein sequence ID" value="CAB15153"/>
    <property type="gene ID" value="BSU_31650"/>
</dbReference>
<dbReference type="GeneID" id="938862"/>
<dbReference type="KEGG" id="bsu:BSU31650"/>
<dbReference type="PATRIC" id="fig|224308.179.peg.3430"/>
<dbReference type="eggNOG" id="COG2212">
    <property type="taxonomic scope" value="Bacteria"/>
</dbReference>
<dbReference type="InParanoid" id="O05228"/>
<dbReference type="OrthoDB" id="9799958at2"/>
<dbReference type="PhylomeDB" id="O05228"/>
<dbReference type="BioCyc" id="BSUB:BSU31650-MONOMER"/>
<dbReference type="Proteomes" id="UP000001570">
    <property type="component" value="Chromosome"/>
</dbReference>
<dbReference type="GO" id="GO:0005886">
    <property type="term" value="C:plasma membrane"/>
    <property type="evidence" value="ECO:0007669"/>
    <property type="project" value="UniProtKB-SubCell"/>
</dbReference>
<dbReference type="GO" id="GO:0015385">
    <property type="term" value="F:sodium:proton antiporter activity"/>
    <property type="evidence" value="ECO:0000318"/>
    <property type="project" value="GO_Central"/>
</dbReference>
<dbReference type="GO" id="GO:0036376">
    <property type="term" value="P:sodium ion export across plasma membrane"/>
    <property type="evidence" value="ECO:0000315"/>
    <property type="project" value="CACAO"/>
</dbReference>
<dbReference type="InterPro" id="IPR007208">
    <property type="entry name" value="MrpF/PhaF-like"/>
</dbReference>
<dbReference type="NCBIfam" id="NF009248">
    <property type="entry name" value="PRK12600.1"/>
    <property type="match status" value="1"/>
</dbReference>
<dbReference type="PANTHER" id="PTHR34702">
    <property type="entry name" value="NA(+)/H(+) ANTIPORTER SUBUNIT F1"/>
    <property type="match status" value="1"/>
</dbReference>
<dbReference type="PANTHER" id="PTHR34702:SF1">
    <property type="entry name" value="NA(+)_H(+) ANTIPORTER SUBUNIT F"/>
    <property type="match status" value="1"/>
</dbReference>
<dbReference type="Pfam" id="PF04066">
    <property type="entry name" value="MrpF_PhaF"/>
    <property type="match status" value="1"/>
</dbReference>
<dbReference type="PIRSF" id="PIRSF028784">
    <property type="entry name" value="MrpF"/>
    <property type="match status" value="1"/>
</dbReference>
<reference key="1">
    <citation type="journal article" date="1997" name="Microbiology">
        <title>Analysis of the Bacillus subtilis genome: cloning and nucleotide sequence of a 62 kb region between 275 degrees (rrnB) and 284 degrees (pai).</title>
        <authorList>
            <person name="Oudega B."/>
            <person name="Koningstein G."/>
            <person name="Rodrigues L."/>
            <person name="de Sales Ramon M."/>
            <person name="Hilbert H."/>
            <person name="Duesterhoeft A."/>
            <person name="Pohl T.M."/>
            <person name="Weitzenegger T."/>
        </authorList>
    </citation>
    <scope>NUCLEOTIDE SEQUENCE [GENOMIC DNA]</scope>
    <source>
        <strain>168</strain>
    </source>
</reference>
<reference key="2">
    <citation type="journal article" date="1997" name="Nature">
        <title>The complete genome sequence of the Gram-positive bacterium Bacillus subtilis.</title>
        <authorList>
            <person name="Kunst F."/>
            <person name="Ogasawara N."/>
            <person name="Moszer I."/>
            <person name="Albertini A.M."/>
            <person name="Alloni G."/>
            <person name="Azevedo V."/>
            <person name="Bertero M.G."/>
            <person name="Bessieres P."/>
            <person name="Bolotin A."/>
            <person name="Borchert S."/>
            <person name="Borriss R."/>
            <person name="Boursier L."/>
            <person name="Brans A."/>
            <person name="Braun M."/>
            <person name="Brignell S.C."/>
            <person name="Bron S."/>
            <person name="Brouillet S."/>
            <person name="Bruschi C.V."/>
            <person name="Caldwell B."/>
            <person name="Capuano V."/>
            <person name="Carter N.M."/>
            <person name="Choi S.-K."/>
            <person name="Codani J.-J."/>
            <person name="Connerton I.F."/>
            <person name="Cummings N.J."/>
            <person name="Daniel R.A."/>
            <person name="Denizot F."/>
            <person name="Devine K.M."/>
            <person name="Duesterhoeft A."/>
            <person name="Ehrlich S.D."/>
            <person name="Emmerson P.T."/>
            <person name="Entian K.-D."/>
            <person name="Errington J."/>
            <person name="Fabret C."/>
            <person name="Ferrari E."/>
            <person name="Foulger D."/>
            <person name="Fritz C."/>
            <person name="Fujita M."/>
            <person name="Fujita Y."/>
            <person name="Fuma S."/>
            <person name="Galizzi A."/>
            <person name="Galleron N."/>
            <person name="Ghim S.-Y."/>
            <person name="Glaser P."/>
            <person name="Goffeau A."/>
            <person name="Golightly E.J."/>
            <person name="Grandi G."/>
            <person name="Guiseppi G."/>
            <person name="Guy B.J."/>
            <person name="Haga K."/>
            <person name="Haiech J."/>
            <person name="Harwood C.R."/>
            <person name="Henaut A."/>
            <person name="Hilbert H."/>
            <person name="Holsappel S."/>
            <person name="Hosono S."/>
            <person name="Hullo M.-F."/>
            <person name="Itaya M."/>
            <person name="Jones L.-M."/>
            <person name="Joris B."/>
            <person name="Karamata D."/>
            <person name="Kasahara Y."/>
            <person name="Klaerr-Blanchard M."/>
            <person name="Klein C."/>
            <person name="Kobayashi Y."/>
            <person name="Koetter P."/>
            <person name="Koningstein G."/>
            <person name="Krogh S."/>
            <person name="Kumano M."/>
            <person name="Kurita K."/>
            <person name="Lapidus A."/>
            <person name="Lardinois S."/>
            <person name="Lauber J."/>
            <person name="Lazarevic V."/>
            <person name="Lee S.-M."/>
            <person name="Levine A."/>
            <person name="Liu H."/>
            <person name="Masuda S."/>
            <person name="Mauel C."/>
            <person name="Medigue C."/>
            <person name="Medina N."/>
            <person name="Mellado R.P."/>
            <person name="Mizuno M."/>
            <person name="Moestl D."/>
            <person name="Nakai S."/>
            <person name="Noback M."/>
            <person name="Noone D."/>
            <person name="O'Reilly M."/>
            <person name="Ogawa K."/>
            <person name="Ogiwara A."/>
            <person name="Oudega B."/>
            <person name="Park S.-H."/>
            <person name="Parro V."/>
            <person name="Pohl T.M."/>
            <person name="Portetelle D."/>
            <person name="Porwollik S."/>
            <person name="Prescott A.M."/>
            <person name="Presecan E."/>
            <person name="Pujic P."/>
            <person name="Purnelle B."/>
            <person name="Rapoport G."/>
            <person name="Rey M."/>
            <person name="Reynolds S."/>
            <person name="Rieger M."/>
            <person name="Rivolta C."/>
            <person name="Rocha E."/>
            <person name="Roche B."/>
            <person name="Rose M."/>
            <person name="Sadaie Y."/>
            <person name="Sato T."/>
            <person name="Scanlan E."/>
            <person name="Schleich S."/>
            <person name="Schroeter R."/>
            <person name="Scoffone F."/>
            <person name="Sekiguchi J."/>
            <person name="Sekowska A."/>
            <person name="Seror S.J."/>
            <person name="Serror P."/>
            <person name="Shin B.-S."/>
            <person name="Soldo B."/>
            <person name="Sorokin A."/>
            <person name="Tacconi E."/>
            <person name="Takagi T."/>
            <person name="Takahashi H."/>
            <person name="Takemaru K."/>
            <person name="Takeuchi M."/>
            <person name="Tamakoshi A."/>
            <person name="Tanaka T."/>
            <person name="Terpstra P."/>
            <person name="Tognoni A."/>
            <person name="Tosato V."/>
            <person name="Uchiyama S."/>
            <person name="Vandenbol M."/>
            <person name="Vannier F."/>
            <person name="Vassarotti A."/>
            <person name="Viari A."/>
            <person name="Wambutt R."/>
            <person name="Wedler E."/>
            <person name="Wedler H."/>
            <person name="Weitzenegger T."/>
            <person name="Winters P."/>
            <person name="Wipat A."/>
            <person name="Yamamoto H."/>
            <person name="Yamane K."/>
            <person name="Yasumoto K."/>
            <person name="Yata K."/>
            <person name="Yoshida K."/>
            <person name="Yoshikawa H.-F."/>
            <person name="Zumstein E."/>
            <person name="Yoshikawa H."/>
            <person name="Danchin A."/>
        </authorList>
    </citation>
    <scope>NUCLEOTIDE SEQUENCE [LARGE SCALE GENOMIC DNA]</scope>
    <source>
        <strain>168</strain>
    </source>
</reference>
<reference key="3">
    <citation type="journal article" date="2009" name="Microbiology">
        <title>From a consortium sequence to a unified sequence: the Bacillus subtilis 168 reference genome a decade later.</title>
        <authorList>
            <person name="Barbe V."/>
            <person name="Cruveiller S."/>
            <person name="Kunst F."/>
            <person name="Lenoble P."/>
            <person name="Meurice G."/>
            <person name="Sekowska A."/>
            <person name="Vallenet D."/>
            <person name="Wang T."/>
            <person name="Moszer I."/>
            <person name="Medigue C."/>
            <person name="Danchin A."/>
        </authorList>
    </citation>
    <scope>SEQUENCE REVISION TO 14</scope>
</reference>
<reference key="4">
    <citation type="journal article" date="1999" name="J. Bacteriol.">
        <title>mrp, a multigene, multifunctional locus in Bacillus subtilis with roles in resistance to cholate and to Na+ and in pH homeostasis.</title>
        <authorList>
            <person name="Ito M."/>
            <person name="Guffanti A.A."/>
            <person name="Oudega B."/>
            <person name="Krulwich T.A."/>
        </authorList>
    </citation>
    <scope>FUNCTION</scope>
</reference>
<reference key="5">
    <citation type="journal article" date="2000" name="J. Bacteriol.">
        <title>Effects of nonpolar mutations in each of the seven Bacillus subtilis mrp genes suggest complex interactions among the gene products in support of Na(+) and alkali but not cholate resistance.</title>
        <authorList>
            <person name="Ito M."/>
            <person name="Guffanti A.A."/>
            <person name="Wang W."/>
            <person name="Krulwich T.A."/>
        </authorList>
    </citation>
    <scope>FUNCTION</scope>
</reference>
<reference key="6">
    <citation type="journal article" date="2001" name="FEBS Lett.">
        <title>Mrp-dependent Na(+)/H(+) antiporters of Bacillus exhibit characteristics that are unanticipated for completely secondary active transporters.</title>
        <authorList>
            <person name="Ito M."/>
            <person name="Guffanti A.A."/>
            <person name="Krulwich T.A."/>
        </authorList>
    </citation>
    <scope>COUPLING ENERGIZATION MODE</scope>
</reference>
<reference key="7">
    <citation type="journal article" date="2007" name="J. Bacteriol.">
        <title>Catalytic properties of Staphylococcus aureus and Bacillus members of the secondary cation/proton antiporter-3 (Mrp) family are revealed by an optimized assay in an Escherichia coli host.</title>
        <authorList>
            <person name="Swartz T.H."/>
            <person name="Ito M."/>
            <person name="Ohira T."/>
            <person name="Natsui S."/>
            <person name="Hicks D.B."/>
            <person name="Krulwich T.A."/>
        </authorList>
    </citation>
    <scope>FUNCTION IN ANTIPORT OF LITHIUM</scope>
</reference>
<reference key="8">
    <citation type="journal article" date="2007" name="J. Bacteriol.">
        <title>Complex formation by the mrpABCDEFG gene products, which constitute a principal Na+/H+ antiporter in Bacillus subtilis.</title>
        <authorList>
            <person name="Kajiyama Y."/>
            <person name="Otagiri M."/>
            <person name="Sekiguchi J."/>
            <person name="Kosono S."/>
            <person name="Kudo T."/>
        </authorList>
    </citation>
    <scope>SUBUNIT</scope>
    <source>
        <strain>168 / Marburg / UOT1285</strain>
    </source>
</reference>
<proteinExistence type="evidence at protein level"/>
<accession>O05228</accession>
<feature type="chain" id="PRO_0000087742" description="Na(+)/H(+) antiporter subunit F">
    <location>
        <begin position="1"/>
        <end position="94"/>
    </location>
</feature>
<feature type="transmembrane region" description="Helical" evidence="1">
    <location>
        <begin position="2"/>
        <end position="22"/>
    </location>
</feature>
<feature type="transmembrane region" description="Helical" evidence="1">
    <location>
        <begin position="34"/>
        <end position="54"/>
    </location>
</feature>
<feature type="transmembrane region" description="Helical" evidence="1">
    <location>
        <begin position="59"/>
        <end position="79"/>
    </location>
</feature>
<feature type="sequence conflict" description="In Ref. 1; CAB07907." evidence="3" ref="1">
    <original>A</original>
    <variation>G</variation>
    <location>
        <position position="14"/>
    </location>
</feature>
<comment type="function">
    <text>Mrp complex is a Na(+)/H(+) antiporter that is considered to be the major Na(+) excretion system in B.subtilis. Has a major role in Na(+) resistance and a minor role in Na(+)- and K(+)-dependent pH homeostasis as compared to TetB. MrpA may be the actual Na(+)/H(+) antiporter, although the six other Mrp proteins are all required for Na(+)/H(+) antiport activity and Na(+) resistance. MrpA is required for initiation of sporulation when external Na(+) concentration increases. Also transports Li(+) but not K(+), Ca(2+) or Mg(2+).</text>
</comment>
<comment type="function">
    <text>Involved in cholate and Na(+) efflux activities, which may be mechanistically coupled. Does not require other Mrp proteins for its own function.</text>
</comment>
<comment type="subunit">
    <text evidence="2">Forms a heterooligomeric complex that consists of seven subunits: MrpA, MrpB, MrpC, MrpD, MrpE, MrpF and MrpG.</text>
</comment>
<comment type="subcellular location">
    <subcellularLocation>
        <location evidence="3">Cell membrane</location>
        <topology evidence="3">Multi-pass membrane protein</topology>
    </subcellularLocation>
</comment>
<comment type="miscellaneous">
    <text>Mrp-dependent antiport apparently occurs by a secondary, proton motive force-dependent mechanism, but the similarity of several Mrp proteins to membrane-embedded subunits of energy-coupled NADH dehydrogenase complexes raises the possibility that there is a capacity for electron transport that could provide a primary energy coupling option for Mrp functions.</text>
</comment>
<comment type="similarity">
    <text evidence="3">Belongs to the CPA3 antiporters (TC 2.A.63) subunit F family.</text>
</comment>
<gene>
    <name type="primary">mrpF</name>
    <name type="synonym">yufC</name>
    <name type="ordered locus">BSU31650</name>
</gene>
<protein>
    <recommendedName>
        <fullName>Na(+)/H(+) antiporter subunit F</fullName>
    </recommendedName>
    <alternativeName>
        <fullName>Mrp complex subunit F</fullName>
    </alternativeName>
    <alternativeName>
        <fullName>Multiple resistance and pH homeostasis protein F</fullName>
    </alternativeName>
    <alternativeName>
        <fullName>Sodium-cholate efflux protein MrpF</fullName>
    </alternativeName>
</protein>
<sequence>MFTLILQIALGIMAVSTFLYVIRVIKGPTVPDRVVALDAIGINLIAITALVSILLKTSAFLDIILLLGILSFIGTIAFSKFLEKGEIIENDRNR</sequence>
<evidence type="ECO:0000255" key="1"/>
<evidence type="ECO:0000269" key="2">
    <source>
    </source>
</evidence>
<evidence type="ECO:0000305" key="3"/>
<name>MRPF_BACSU</name>
<keyword id="KW-0050">Antiport</keyword>
<keyword id="KW-1003">Cell membrane</keyword>
<keyword id="KW-0375">Hydrogen ion transport</keyword>
<keyword id="KW-0406">Ion transport</keyword>
<keyword id="KW-0472">Membrane</keyword>
<keyword id="KW-1185">Reference proteome</keyword>
<keyword id="KW-0915">Sodium</keyword>
<keyword id="KW-0739">Sodium transport</keyword>
<keyword id="KW-0812">Transmembrane</keyword>
<keyword id="KW-1133">Transmembrane helix</keyword>
<keyword id="KW-0813">Transport</keyword>